<protein>
    <recommendedName>
        <fullName evidence="1">Glutamine--tRNA ligase</fullName>
        <ecNumber evidence="1">6.1.1.18</ecNumber>
    </recommendedName>
    <alternativeName>
        <fullName evidence="1">Glutaminyl-tRNA synthetase</fullName>
        <shortName evidence="1">GlnRS</shortName>
    </alternativeName>
</protein>
<comment type="catalytic activity">
    <reaction evidence="1">
        <text>tRNA(Gln) + L-glutamine + ATP = L-glutaminyl-tRNA(Gln) + AMP + diphosphate</text>
        <dbReference type="Rhea" id="RHEA:20121"/>
        <dbReference type="Rhea" id="RHEA-COMP:9662"/>
        <dbReference type="Rhea" id="RHEA-COMP:9681"/>
        <dbReference type="ChEBI" id="CHEBI:30616"/>
        <dbReference type="ChEBI" id="CHEBI:33019"/>
        <dbReference type="ChEBI" id="CHEBI:58359"/>
        <dbReference type="ChEBI" id="CHEBI:78442"/>
        <dbReference type="ChEBI" id="CHEBI:78521"/>
        <dbReference type="ChEBI" id="CHEBI:456215"/>
        <dbReference type="EC" id="6.1.1.18"/>
    </reaction>
</comment>
<comment type="subunit">
    <text evidence="1">Monomer.</text>
</comment>
<comment type="subcellular location">
    <subcellularLocation>
        <location evidence="1">Cytoplasm</location>
    </subcellularLocation>
</comment>
<comment type="similarity">
    <text evidence="1 2">Belongs to the class-I aminoacyl-tRNA synthetase family.</text>
</comment>
<comment type="sequence caution" evidence="2">
    <conflict type="erroneous initiation">
        <sequence resource="EMBL-CDS" id="CAM08876"/>
    </conflict>
</comment>
<sequence length="562" mass="64770">MLNKDQFADNHFIRTIIEDDLKSGKHEAVQTRFPPEPNGYLHIGHAKSICLNFGLAYIYDGLCNLRFDDTNPEKENDEYVNAIKEDVEWLGFHWAGEPRFASNYFDQLYDYAVGLIKDGKAYVDDLTPEEMREYRGTLTEAGKNSPYRDRSVEENLDLFTRMKNGEFPDGSKTLRLKIDMASGNINMRDPVIYRIRRAHHHNTGDKWCIYPMYDYTHCISDAIEGITHSLCTLEFEAHRPLYDWVLDNIHAPHATRPRQYEFSRLELLYTITSKRKLNQLVVEKHVSGWDDPRMPTISGMRRRGYTPEGLRLFAKRAGISKSENIVDMSVLEGAIREELENSAPRLMAVLNPLKVTLTNFEAGRTQSRRAAFHPNHEEMGEREVPISQTIYIEADDFAENPPKGFKRLIPGGEVRLRHGYVIKCDEVVKDEAGNVVELKCSIDHDTLGKNPEGRKVKGVIHWVSAEHAAEIKVRLYDRLFTIERPDAVRGEDGEYLPFTDFLNPESVKEITAYAEPAAKDLPAESRWQFERIGYFVTDRKDHGKDTPVFNRTVTLKDSWQPK</sequence>
<keyword id="KW-0030">Aminoacyl-tRNA synthetase</keyword>
<keyword id="KW-0067">ATP-binding</keyword>
<keyword id="KW-0963">Cytoplasm</keyword>
<keyword id="KW-0436">Ligase</keyword>
<keyword id="KW-0547">Nucleotide-binding</keyword>
<keyword id="KW-0648">Protein biosynthesis</keyword>
<feature type="chain" id="PRO_0000195838" description="Glutamine--tRNA ligase">
    <location>
        <begin position="1"/>
        <end position="562"/>
    </location>
</feature>
<feature type="short sequence motif" description="'HIGH' region" evidence="1">
    <location>
        <begin position="35"/>
        <end position="45"/>
    </location>
</feature>
<feature type="short sequence motif" description="'KMSKS' region" evidence="1">
    <location>
        <begin position="271"/>
        <end position="275"/>
    </location>
</feature>
<feature type="binding site" evidence="1">
    <location>
        <begin position="36"/>
        <end position="38"/>
    </location>
    <ligand>
        <name>ATP</name>
        <dbReference type="ChEBI" id="CHEBI:30616"/>
    </ligand>
</feature>
<feature type="binding site" evidence="1">
    <location>
        <begin position="42"/>
        <end position="48"/>
    </location>
    <ligand>
        <name>ATP</name>
        <dbReference type="ChEBI" id="CHEBI:30616"/>
    </ligand>
</feature>
<feature type="binding site" evidence="1">
    <location>
        <position position="68"/>
    </location>
    <ligand>
        <name>L-glutamine</name>
        <dbReference type="ChEBI" id="CHEBI:58359"/>
    </ligand>
</feature>
<feature type="binding site" evidence="1">
    <location>
        <position position="213"/>
    </location>
    <ligand>
        <name>L-glutamine</name>
        <dbReference type="ChEBI" id="CHEBI:58359"/>
    </ligand>
</feature>
<feature type="binding site" evidence="1">
    <location>
        <position position="232"/>
    </location>
    <ligand>
        <name>ATP</name>
        <dbReference type="ChEBI" id="CHEBI:30616"/>
    </ligand>
</feature>
<feature type="binding site" evidence="1">
    <location>
        <begin position="264"/>
        <end position="265"/>
    </location>
    <ligand>
        <name>ATP</name>
        <dbReference type="ChEBI" id="CHEBI:30616"/>
    </ligand>
</feature>
<gene>
    <name evidence="1" type="primary">glnS</name>
    <name type="ordered locus">NMA1748</name>
</gene>
<dbReference type="EC" id="6.1.1.18" evidence="1"/>
<dbReference type="EMBL" id="AL157959">
    <property type="protein sequence ID" value="CAM08876.1"/>
    <property type="status" value="ALT_INIT"/>
    <property type="molecule type" value="Genomic_DNA"/>
</dbReference>
<dbReference type="RefSeq" id="WP_002245352.1">
    <property type="nucleotide sequence ID" value="NC_003116.1"/>
</dbReference>
<dbReference type="SMR" id="P57000"/>
<dbReference type="EnsemblBacteria" id="CAM08876">
    <property type="protein sequence ID" value="CAM08876"/>
    <property type="gene ID" value="NMA1748"/>
</dbReference>
<dbReference type="GeneID" id="93387828"/>
<dbReference type="KEGG" id="nma:NMA1748"/>
<dbReference type="HOGENOM" id="CLU_001882_2_3_4"/>
<dbReference type="Proteomes" id="UP000000626">
    <property type="component" value="Chromosome"/>
</dbReference>
<dbReference type="GO" id="GO:0005829">
    <property type="term" value="C:cytosol"/>
    <property type="evidence" value="ECO:0007669"/>
    <property type="project" value="TreeGrafter"/>
</dbReference>
<dbReference type="GO" id="GO:0005524">
    <property type="term" value="F:ATP binding"/>
    <property type="evidence" value="ECO:0007669"/>
    <property type="project" value="UniProtKB-UniRule"/>
</dbReference>
<dbReference type="GO" id="GO:0004819">
    <property type="term" value="F:glutamine-tRNA ligase activity"/>
    <property type="evidence" value="ECO:0007669"/>
    <property type="project" value="UniProtKB-UniRule"/>
</dbReference>
<dbReference type="GO" id="GO:0006425">
    <property type="term" value="P:glutaminyl-tRNA aminoacylation"/>
    <property type="evidence" value="ECO:0007669"/>
    <property type="project" value="InterPro"/>
</dbReference>
<dbReference type="GO" id="GO:0006424">
    <property type="term" value="P:glutamyl-tRNA aminoacylation"/>
    <property type="evidence" value="ECO:0007669"/>
    <property type="project" value="UniProtKB-UniRule"/>
</dbReference>
<dbReference type="FunFam" id="1.10.1160.10:FF:000001">
    <property type="entry name" value="Glutamine--tRNA ligase"/>
    <property type="match status" value="1"/>
</dbReference>
<dbReference type="FunFam" id="2.40.240.10:FF:000001">
    <property type="entry name" value="Glutamine--tRNA ligase"/>
    <property type="match status" value="1"/>
</dbReference>
<dbReference type="FunFam" id="2.40.240.10:FF:000020">
    <property type="entry name" value="Glutamine--tRNA ligase"/>
    <property type="match status" value="1"/>
</dbReference>
<dbReference type="FunFam" id="3.90.800.10:FF:000001">
    <property type="entry name" value="Glutamine--tRNA ligase"/>
    <property type="match status" value="1"/>
</dbReference>
<dbReference type="FunFam" id="3.40.50.620:FF:000037">
    <property type="entry name" value="Glutamine--tRNA ligase cytoplasmic"/>
    <property type="match status" value="1"/>
</dbReference>
<dbReference type="Gene3D" id="3.40.50.620">
    <property type="entry name" value="HUPs"/>
    <property type="match status" value="1"/>
</dbReference>
<dbReference type="Gene3D" id="2.40.240.10">
    <property type="entry name" value="Ribosomal Protein L25, Chain P"/>
    <property type="match status" value="2"/>
</dbReference>
<dbReference type="HAMAP" id="MF_00126">
    <property type="entry name" value="Gln_tRNA_synth"/>
    <property type="match status" value="1"/>
</dbReference>
<dbReference type="InterPro" id="IPR004514">
    <property type="entry name" value="Gln-tRNA-synth"/>
</dbReference>
<dbReference type="InterPro" id="IPR050132">
    <property type="entry name" value="Gln/Glu-tRNA_Ligase"/>
</dbReference>
<dbReference type="InterPro" id="IPR022861">
    <property type="entry name" value="Gln_tRNA_ligase_bac"/>
</dbReference>
<dbReference type="InterPro" id="IPR000924">
    <property type="entry name" value="Glu/Gln-tRNA-synth"/>
</dbReference>
<dbReference type="InterPro" id="IPR020058">
    <property type="entry name" value="Glu/Gln-tRNA-synth_Ib_cat-dom"/>
</dbReference>
<dbReference type="InterPro" id="IPR020059">
    <property type="entry name" value="Glu/Gln-tRNA-synth_Ib_codon-bd"/>
</dbReference>
<dbReference type="InterPro" id="IPR020056">
    <property type="entry name" value="Rbsml_bL25/Gln-tRNA_synth_N"/>
</dbReference>
<dbReference type="InterPro" id="IPR011035">
    <property type="entry name" value="Ribosomal_bL25/Gln-tRNA_synth"/>
</dbReference>
<dbReference type="InterPro" id="IPR014729">
    <property type="entry name" value="Rossmann-like_a/b/a_fold"/>
</dbReference>
<dbReference type="InterPro" id="IPR049437">
    <property type="entry name" value="tRNA-synt_1c_C2"/>
</dbReference>
<dbReference type="NCBIfam" id="TIGR00440">
    <property type="entry name" value="glnS"/>
    <property type="match status" value="1"/>
</dbReference>
<dbReference type="NCBIfam" id="NF011291">
    <property type="entry name" value="PRK14703.1"/>
    <property type="match status" value="1"/>
</dbReference>
<dbReference type="PANTHER" id="PTHR43097:SF5">
    <property type="entry name" value="GLUTAMATE--TRNA LIGASE"/>
    <property type="match status" value="1"/>
</dbReference>
<dbReference type="PANTHER" id="PTHR43097">
    <property type="entry name" value="GLUTAMINE-TRNA LIGASE"/>
    <property type="match status" value="1"/>
</dbReference>
<dbReference type="Pfam" id="PF00749">
    <property type="entry name" value="tRNA-synt_1c"/>
    <property type="match status" value="1"/>
</dbReference>
<dbReference type="Pfam" id="PF03950">
    <property type="entry name" value="tRNA-synt_1c_C"/>
    <property type="match status" value="1"/>
</dbReference>
<dbReference type="Pfam" id="PF20974">
    <property type="entry name" value="tRNA-synt_1c_C2"/>
    <property type="match status" value="1"/>
</dbReference>
<dbReference type="PRINTS" id="PR00987">
    <property type="entry name" value="TRNASYNTHGLU"/>
</dbReference>
<dbReference type="SUPFAM" id="SSF52374">
    <property type="entry name" value="Nucleotidylyl transferase"/>
    <property type="match status" value="1"/>
</dbReference>
<dbReference type="SUPFAM" id="SSF50715">
    <property type="entry name" value="Ribosomal protein L25-like"/>
    <property type="match status" value="1"/>
</dbReference>
<dbReference type="PROSITE" id="PS00178">
    <property type="entry name" value="AA_TRNA_LIGASE_I"/>
    <property type="match status" value="1"/>
</dbReference>
<name>SYQ_NEIMA</name>
<evidence type="ECO:0000255" key="1">
    <source>
        <dbReference type="HAMAP-Rule" id="MF_00126"/>
    </source>
</evidence>
<evidence type="ECO:0000305" key="2"/>
<proteinExistence type="inferred from homology"/>
<organism>
    <name type="scientific">Neisseria meningitidis serogroup A / serotype 4A (strain DSM 15465 / Z2491)</name>
    <dbReference type="NCBI Taxonomy" id="122587"/>
    <lineage>
        <taxon>Bacteria</taxon>
        <taxon>Pseudomonadati</taxon>
        <taxon>Pseudomonadota</taxon>
        <taxon>Betaproteobacteria</taxon>
        <taxon>Neisseriales</taxon>
        <taxon>Neisseriaceae</taxon>
        <taxon>Neisseria</taxon>
    </lineage>
</organism>
<accession>P57000</accession>
<accession>A1ISW4</accession>
<reference key="1">
    <citation type="journal article" date="2000" name="Nature">
        <title>Complete DNA sequence of a serogroup A strain of Neisseria meningitidis Z2491.</title>
        <authorList>
            <person name="Parkhill J."/>
            <person name="Achtman M."/>
            <person name="James K.D."/>
            <person name="Bentley S.D."/>
            <person name="Churcher C.M."/>
            <person name="Klee S.R."/>
            <person name="Morelli G."/>
            <person name="Basham D."/>
            <person name="Brown D."/>
            <person name="Chillingworth T."/>
            <person name="Davies R.M."/>
            <person name="Davis P."/>
            <person name="Devlin K."/>
            <person name="Feltwell T."/>
            <person name="Hamlin N."/>
            <person name="Holroyd S."/>
            <person name="Jagels K."/>
            <person name="Leather S."/>
            <person name="Moule S."/>
            <person name="Mungall K.L."/>
            <person name="Quail M.A."/>
            <person name="Rajandream M.A."/>
            <person name="Rutherford K.M."/>
            <person name="Simmonds M."/>
            <person name="Skelton J."/>
            <person name="Whitehead S."/>
            <person name="Spratt B.G."/>
            <person name="Barrell B.G."/>
        </authorList>
    </citation>
    <scope>NUCLEOTIDE SEQUENCE [LARGE SCALE GENOMIC DNA]</scope>
    <source>
        <strain>DSM 15465 / Z2491</strain>
    </source>
</reference>